<dbReference type="EC" id="3.4.11.1" evidence="1"/>
<dbReference type="EC" id="3.4.11.10" evidence="1"/>
<dbReference type="EMBL" id="CP000671">
    <property type="protein sequence ID" value="ABQ98122.1"/>
    <property type="molecule type" value="Genomic_DNA"/>
</dbReference>
<dbReference type="SMR" id="A5UBH1"/>
<dbReference type="MEROPS" id="M17.003"/>
<dbReference type="KEGG" id="hip:CGSHiEE_03505"/>
<dbReference type="HOGENOM" id="CLU_013734_2_2_6"/>
<dbReference type="GO" id="GO:0005737">
    <property type="term" value="C:cytoplasm"/>
    <property type="evidence" value="ECO:0007669"/>
    <property type="project" value="UniProtKB-SubCell"/>
</dbReference>
<dbReference type="GO" id="GO:0030145">
    <property type="term" value="F:manganese ion binding"/>
    <property type="evidence" value="ECO:0007669"/>
    <property type="project" value="UniProtKB-UniRule"/>
</dbReference>
<dbReference type="GO" id="GO:0070006">
    <property type="term" value="F:metalloaminopeptidase activity"/>
    <property type="evidence" value="ECO:0007669"/>
    <property type="project" value="InterPro"/>
</dbReference>
<dbReference type="GO" id="GO:0006508">
    <property type="term" value="P:proteolysis"/>
    <property type="evidence" value="ECO:0007669"/>
    <property type="project" value="UniProtKB-KW"/>
</dbReference>
<dbReference type="CDD" id="cd00433">
    <property type="entry name" value="Peptidase_M17"/>
    <property type="match status" value="1"/>
</dbReference>
<dbReference type="FunFam" id="3.40.630.10:FF:000004">
    <property type="entry name" value="Probable cytosol aminopeptidase"/>
    <property type="match status" value="1"/>
</dbReference>
<dbReference type="Gene3D" id="3.40.220.10">
    <property type="entry name" value="Leucine Aminopeptidase, subunit E, domain 1"/>
    <property type="match status" value="1"/>
</dbReference>
<dbReference type="Gene3D" id="3.40.630.10">
    <property type="entry name" value="Zn peptidases"/>
    <property type="match status" value="1"/>
</dbReference>
<dbReference type="HAMAP" id="MF_00181">
    <property type="entry name" value="Cytosol_peptidase_M17"/>
    <property type="match status" value="1"/>
</dbReference>
<dbReference type="InterPro" id="IPR011356">
    <property type="entry name" value="Leucine_aapep/pepB"/>
</dbReference>
<dbReference type="InterPro" id="IPR043472">
    <property type="entry name" value="Macro_dom-like"/>
</dbReference>
<dbReference type="InterPro" id="IPR000819">
    <property type="entry name" value="Peptidase_M17_C"/>
</dbReference>
<dbReference type="InterPro" id="IPR023042">
    <property type="entry name" value="Peptidase_M17_leu_NH2_pept"/>
</dbReference>
<dbReference type="InterPro" id="IPR008283">
    <property type="entry name" value="Peptidase_M17_N"/>
</dbReference>
<dbReference type="NCBIfam" id="NF002073">
    <property type="entry name" value="PRK00913.1-2"/>
    <property type="match status" value="1"/>
</dbReference>
<dbReference type="NCBIfam" id="NF002074">
    <property type="entry name" value="PRK00913.1-4"/>
    <property type="match status" value="1"/>
</dbReference>
<dbReference type="NCBIfam" id="NF002077">
    <property type="entry name" value="PRK00913.2-4"/>
    <property type="match status" value="1"/>
</dbReference>
<dbReference type="NCBIfam" id="NF002083">
    <property type="entry name" value="PRK00913.3-5"/>
    <property type="match status" value="1"/>
</dbReference>
<dbReference type="PANTHER" id="PTHR11963:SF23">
    <property type="entry name" value="CYTOSOL AMINOPEPTIDASE"/>
    <property type="match status" value="1"/>
</dbReference>
<dbReference type="PANTHER" id="PTHR11963">
    <property type="entry name" value="LEUCINE AMINOPEPTIDASE-RELATED"/>
    <property type="match status" value="1"/>
</dbReference>
<dbReference type="Pfam" id="PF00883">
    <property type="entry name" value="Peptidase_M17"/>
    <property type="match status" value="1"/>
</dbReference>
<dbReference type="Pfam" id="PF02789">
    <property type="entry name" value="Peptidase_M17_N"/>
    <property type="match status" value="1"/>
</dbReference>
<dbReference type="PRINTS" id="PR00481">
    <property type="entry name" value="LAMNOPPTDASE"/>
</dbReference>
<dbReference type="SUPFAM" id="SSF52949">
    <property type="entry name" value="Macro domain-like"/>
    <property type="match status" value="1"/>
</dbReference>
<dbReference type="SUPFAM" id="SSF53187">
    <property type="entry name" value="Zn-dependent exopeptidases"/>
    <property type="match status" value="1"/>
</dbReference>
<dbReference type="PROSITE" id="PS00631">
    <property type="entry name" value="CYTOSOL_AP"/>
    <property type="match status" value="1"/>
</dbReference>
<proteinExistence type="inferred from homology"/>
<protein>
    <recommendedName>
        <fullName evidence="1">Probable cytosol aminopeptidase</fullName>
        <ecNumber evidence="1">3.4.11.1</ecNumber>
    </recommendedName>
    <alternativeName>
        <fullName evidence="1">Leucine aminopeptidase</fullName>
        <shortName evidence="1">LAP</shortName>
        <ecNumber evidence="1">3.4.11.10</ecNumber>
    </alternativeName>
    <alternativeName>
        <fullName evidence="1">Leucyl aminopeptidase</fullName>
    </alternativeName>
</protein>
<sequence length="491" mass="53540">MKYQAKNTALSQATDCIVLGIYENNKFSKSFNEIDQLTQGYLNDLVKSGELTGKLAQTILLRDLQGLSAKRLLIVGCGKKGELTERQYKQIIQAVLKTLKETNTREVISYLTEIELKDRDLYWNIRFAIETIEHTNYQFDHFKSQKAETSVLESFIFNTDCNQAQQAISHANAISSGIKAARDIANMPPNICNPAYLAEQAKNLAENSTALSLKVVDEEEMAKLGMNAYLAVSKGSENRAYMSVLTFNNAPDKNAKPIVLVGKGLTFDAGGISLKPAADMDEMKYDMCGAASVFGTMKAIAQLNLPLNVIGVLAGCENLPDGNAYRPGDILTTMNGLTVEVLNTDAEGRLVLCDALTYVERFEPELVIDVATLTGACVVALGQHNSGLVSTDNNLANALLQAATETTDKAWRLPLSEEYQEQLKSPFADLANIGGRWGGAITAGAFLSNFTKKYRWAHLDIAGTAWLQGANKGATGRPVSLLTQFLINQVK</sequence>
<keyword id="KW-0031">Aminopeptidase</keyword>
<keyword id="KW-0963">Cytoplasm</keyword>
<keyword id="KW-0378">Hydrolase</keyword>
<keyword id="KW-0464">Manganese</keyword>
<keyword id="KW-0479">Metal-binding</keyword>
<keyword id="KW-0645">Protease</keyword>
<gene>
    <name evidence="1" type="primary">pepA</name>
    <name type="ordered locus">CGSHiEE_03505</name>
</gene>
<comment type="function">
    <text evidence="1">Presumably involved in the processing and regular turnover of intracellular proteins. Catalyzes the removal of unsubstituted N-terminal amino acids from various peptides.</text>
</comment>
<comment type="catalytic activity">
    <reaction evidence="1">
        <text>Release of an N-terminal amino acid, Xaa-|-Yaa-, in which Xaa is preferably Leu, but may be other amino acids including Pro although not Arg or Lys, and Yaa may be Pro. Amino acid amides and methyl esters are also readily hydrolyzed, but rates on arylamides are exceedingly low.</text>
        <dbReference type="EC" id="3.4.11.1"/>
    </reaction>
</comment>
<comment type="catalytic activity">
    <reaction evidence="1">
        <text>Release of an N-terminal amino acid, preferentially leucine, but not glutamic or aspartic acids.</text>
        <dbReference type="EC" id="3.4.11.10"/>
    </reaction>
</comment>
<comment type="cofactor">
    <cofactor evidence="1">
        <name>Mn(2+)</name>
        <dbReference type="ChEBI" id="CHEBI:29035"/>
    </cofactor>
    <text evidence="1">Binds 2 manganese ions per subunit.</text>
</comment>
<comment type="subcellular location">
    <subcellularLocation>
        <location evidence="1">Cytoplasm</location>
    </subcellularLocation>
</comment>
<comment type="similarity">
    <text evidence="1">Belongs to the peptidase M17 family.</text>
</comment>
<accession>A5UBH1</accession>
<evidence type="ECO:0000255" key="1">
    <source>
        <dbReference type="HAMAP-Rule" id="MF_00181"/>
    </source>
</evidence>
<reference key="1">
    <citation type="journal article" date="2007" name="Genome Biol.">
        <title>Characterization and modeling of the Haemophilus influenzae core and supragenomes based on the complete genomic sequences of Rd and 12 clinical nontypeable strains.</title>
        <authorList>
            <person name="Hogg J.S."/>
            <person name="Hu F.Z."/>
            <person name="Janto B."/>
            <person name="Boissy R."/>
            <person name="Hayes J."/>
            <person name="Keefe R."/>
            <person name="Post J.C."/>
            <person name="Ehrlich G.D."/>
        </authorList>
    </citation>
    <scope>NUCLEOTIDE SEQUENCE [LARGE SCALE GENOMIC DNA]</scope>
    <source>
        <strain>PittEE</strain>
    </source>
</reference>
<organism>
    <name type="scientific">Haemophilus influenzae (strain PittEE)</name>
    <dbReference type="NCBI Taxonomy" id="374930"/>
    <lineage>
        <taxon>Bacteria</taxon>
        <taxon>Pseudomonadati</taxon>
        <taxon>Pseudomonadota</taxon>
        <taxon>Gammaproteobacteria</taxon>
        <taxon>Pasteurellales</taxon>
        <taxon>Pasteurellaceae</taxon>
        <taxon>Haemophilus</taxon>
    </lineage>
</organism>
<feature type="chain" id="PRO_1000019921" description="Probable cytosol aminopeptidase">
    <location>
        <begin position="1"/>
        <end position="491"/>
    </location>
</feature>
<feature type="active site" evidence="1">
    <location>
        <position position="275"/>
    </location>
</feature>
<feature type="active site" evidence="1">
    <location>
        <position position="349"/>
    </location>
</feature>
<feature type="binding site" evidence="1">
    <location>
        <position position="263"/>
    </location>
    <ligand>
        <name>Mn(2+)</name>
        <dbReference type="ChEBI" id="CHEBI:29035"/>
        <label>2</label>
    </ligand>
</feature>
<feature type="binding site" evidence="1">
    <location>
        <position position="268"/>
    </location>
    <ligand>
        <name>Mn(2+)</name>
        <dbReference type="ChEBI" id="CHEBI:29035"/>
        <label>1</label>
    </ligand>
</feature>
<feature type="binding site" evidence="1">
    <location>
        <position position="268"/>
    </location>
    <ligand>
        <name>Mn(2+)</name>
        <dbReference type="ChEBI" id="CHEBI:29035"/>
        <label>2</label>
    </ligand>
</feature>
<feature type="binding site" evidence="1">
    <location>
        <position position="286"/>
    </location>
    <ligand>
        <name>Mn(2+)</name>
        <dbReference type="ChEBI" id="CHEBI:29035"/>
        <label>2</label>
    </ligand>
</feature>
<feature type="binding site" evidence="1">
    <location>
        <position position="345"/>
    </location>
    <ligand>
        <name>Mn(2+)</name>
        <dbReference type="ChEBI" id="CHEBI:29035"/>
        <label>1</label>
    </ligand>
</feature>
<feature type="binding site" evidence="1">
    <location>
        <position position="347"/>
    </location>
    <ligand>
        <name>Mn(2+)</name>
        <dbReference type="ChEBI" id="CHEBI:29035"/>
        <label>1</label>
    </ligand>
</feature>
<feature type="binding site" evidence="1">
    <location>
        <position position="347"/>
    </location>
    <ligand>
        <name>Mn(2+)</name>
        <dbReference type="ChEBI" id="CHEBI:29035"/>
        <label>2</label>
    </ligand>
</feature>
<name>AMPA_HAEIE</name>